<proteinExistence type="inferred from homology"/>
<reference key="1">
    <citation type="journal article" date="2008" name="J. Bacteriol.">
        <title>Genome sequence of Staphylococcus aureus strain Newman and comparative analysis of staphylococcal genomes: polymorphism and evolution of two major pathogenicity islands.</title>
        <authorList>
            <person name="Baba T."/>
            <person name="Bae T."/>
            <person name="Schneewind O."/>
            <person name="Takeuchi F."/>
            <person name="Hiramatsu K."/>
        </authorList>
    </citation>
    <scope>NUCLEOTIDE SEQUENCE [LARGE SCALE GENOMIC DNA]</scope>
    <source>
        <strain>Newman</strain>
    </source>
</reference>
<name>GPSB_STAAE</name>
<accession>A6QGZ6</accession>
<keyword id="KW-0131">Cell cycle</keyword>
<keyword id="KW-0132">Cell division</keyword>
<keyword id="KW-0133">Cell shape</keyword>
<keyword id="KW-0175">Coiled coil</keyword>
<keyword id="KW-0963">Cytoplasm</keyword>
<protein>
    <recommendedName>
        <fullName evidence="1">Cell cycle protein GpsB</fullName>
    </recommendedName>
    <alternativeName>
        <fullName evidence="1">Guiding PBP1-shuttling protein</fullName>
    </alternativeName>
</protein>
<dbReference type="EMBL" id="AP009351">
    <property type="protein sequence ID" value="BAF67628.1"/>
    <property type="molecule type" value="Genomic_DNA"/>
</dbReference>
<dbReference type="RefSeq" id="WP_001286320.1">
    <property type="nucleotide sequence ID" value="NZ_JBBIAE010000001.1"/>
</dbReference>
<dbReference type="SMR" id="A6QGZ6"/>
<dbReference type="GeneID" id="98345812"/>
<dbReference type="KEGG" id="sae:NWMN_1356"/>
<dbReference type="HOGENOM" id="CLU_140309_1_0_9"/>
<dbReference type="Proteomes" id="UP000006386">
    <property type="component" value="Chromosome"/>
</dbReference>
<dbReference type="GO" id="GO:0005737">
    <property type="term" value="C:cytoplasm"/>
    <property type="evidence" value="ECO:0007669"/>
    <property type="project" value="UniProtKB-SubCell"/>
</dbReference>
<dbReference type="GO" id="GO:0051301">
    <property type="term" value="P:cell division"/>
    <property type="evidence" value="ECO:0007669"/>
    <property type="project" value="UniProtKB-UniRule"/>
</dbReference>
<dbReference type="GO" id="GO:0008360">
    <property type="term" value="P:regulation of cell shape"/>
    <property type="evidence" value="ECO:0007669"/>
    <property type="project" value="UniProtKB-UniRule"/>
</dbReference>
<dbReference type="Gene3D" id="6.10.250.660">
    <property type="match status" value="1"/>
</dbReference>
<dbReference type="HAMAP" id="MF_02011">
    <property type="entry name" value="GpsB"/>
    <property type="match status" value="1"/>
</dbReference>
<dbReference type="InterPro" id="IPR011229">
    <property type="entry name" value="Cell_cycle_GpsB"/>
</dbReference>
<dbReference type="InterPro" id="IPR019933">
    <property type="entry name" value="DivIVA_domain"/>
</dbReference>
<dbReference type="InterPro" id="IPR007793">
    <property type="entry name" value="DivIVA_fam"/>
</dbReference>
<dbReference type="NCBIfam" id="TIGR03544">
    <property type="entry name" value="DivI1A_domain"/>
    <property type="match status" value="1"/>
</dbReference>
<dbReference type="NCBIfam" id="NF010725">
    <property type="entry name" value="PRK14127.1"/>
    <property type="match status" value="1"/>
</dbReference>
<dbReference type="PANTHER" id="PTHR35794:SF1">
    <property type="entry name" value="CELL CYCLE PROTEIN GPSB"/>
    <property type="match status" value="1"/>
</dbReference>
<dbReference type="PANTHER" id="PTHR35794">
    <property type="entry name" value="CELL DIVISION PROTEIN DIVIVA"/>
    <property type="match status" value="1"/>
</dbReference>
<dbReference type="Pfam" id="PF05103">
    <property type="entry name" value="DivIVA"/>
    <property type="match status" value="1"/>
</dbReference>
<dbReference type="PIRSF" id="PIRSF029938">
    <property type="entry name" value="UCP029938"/>
    <property type="match status" value="1"/>
</dbReference>
<evidence type="ECO:0000255" key="1">
    <source>
        <dbReference type="HAMAP-Rule" id="MF_02011"/>
    </source>
</evidence>
<evidence type="ECO:0000256" key="2">
    <source>
        <dbReference type="SAM" id="MobiDB-lite"/>
    </source>
</evidence>
<gene>
    <name evidence="1" type="primary">gpsB</name>
    <name type="ordered locus">NWMN_1356</name>
</gene>
<comment type="function">
    <text evidence="1">Divisome component that associates with the complex late in its assembly, after the Z-ring is formed, and is dependent on DivIC and PBP2B for its recruitment to the divisome. Together with EzrA, is a key component of the system that regulates PBP1 localization during cell cycle progression. Its main role could be the removal of PBP1 from the cell pole after pole maturation is completed. Also contributes to the recruitment of PBP1 to the division complex. Not essential for septum formation.</text>
</comment>
<comment type="subunit">
    <text evidence="1">Forms polymers through the coiled coil domains. Interacts with PBP1, MreC and EzrA.</text>
</comment>
<comment type="subcellular location">
    <subcellularLocation>
        <location evidence="1">Cytoplasm</location>
    </subcellularLocation>
    <text evidence="1">Shuttles between the lateral wall and the division site in a cell cycle-dependent manner.</text>
</comment>
<comment type="similarity">
    <text evidence="1">Belongs to the GpsB family.</text>
</comment>
<sequence length="114" mass="13151">MSDVSLKLSAKDIYEKDFEKTMARGYRREEVDAFLDDIIADYQKMADMNNEVVKLSEENHKLKKELEELRLRVATSRPQDNKSFSSNNTTTNTSSNNVDILKRISNLEKAVFGK</sequence>
<organism>
    <name type="scientific">Staphylococcus aureus (strain Newman)</name>
    <dbReference type="NCBI Taxonomy" id="426430"/>
    <lineage>
        <taxon>Bacteria</taxon>
        <taxon>Bacillati</taxon>
        <taxon>Bacillota</taxon>
        <taxon>Bacilli</taxon>
        <taxon>Bacillales</taxon>
        <taxon>Staphylococcaceae</taxon>
        <taxon>Staphylococcus</taxon>
    </lineage>
</organism>
<feature type="chain" id="PRO_0000337942" description="Cell cycle protein GpsB">
    <location>
        <begin position="1"/>
        <end position="114"/>
    </location>
</feature>
<feature type="region of interest" description="Disordered" evidence="2">
    <location>
        <begin position="74"/>
        <end position="99"/>
    </location>
</feature>
<feature type="coiled-coil region" evidence="1">
    <location>
        <begin position="42"/>
        <end position="77"/>
    </location>
</feature>
<feature type="compositionally biased region" description="Low complexity" evidence="2">
    <location>
        <begin position="85"/>
        <end position="97"/>
    </location>
</feature>